<feature type="chain" id="PRO_0000307756" description="Protein ripply1">
    <location>
        <begin position="1"/>
        <end position="151"/>
    </location>
</feature>
<feature type="region of interest" description="Ripply homology domain" evidence="3">
    <location>
        <begin position="96"/>
        <end position="131"/>
    </location>
</feature>
<feature type="region of interest" description="Disordered" evidence="4">
    <location>
        <begin position="130"/>
        <end position="151"/>
    </location>
</feature>
<feature type="short sequence motif" description="WRPW motif" evidence="3">
    <location>
        <begin position="57"/>
        <end position="60"/>
    </location>
</feature>
<feature type="compositionally biased region" description="Acidic residues" evidence="4">
    <location>
        <begin position="132"/>
        <end position="151"/>
    </location>
</feature>
<feature type="splice variant" id="VSP_052555" description="In isoform 2." evidence="7 8">
    <location>
        <begin position="53"/>
        <end position="99"/>
    </location>
</feature>
<name>RIPP1_HUMAN</name>
<reference evidence="11" key="1">
    <citation type="journal article" date="2005" name="Nature">
        <title>The DNA sequence of the human X chromosome.</title>
        <authorList>
            <person name="Ross M.T."/>
            <person name="Grafham D.V."/>
            <person name="Coffey A.J."/>
            <person name="Scherer S."/>
            <person name="McLay K."/>
            <person name="Muzny D."/>
            <person name="Platzer M."/>
            <person name="Howell G.R."/>
            <person name="Burrows C."/>
            <person name="Bird C.P."/>
            <person name="Frankish A."/>
            <person name="Lovell F.L."/>
            <person name="Howe K.L."/>
            <person name="Ashurst J.L."/>
            <person name="Fulton R.S."/>
            <person name="Sudbrak R."/>
            <person name="Wen G."/>
            <person name="Jones M.C."/>
            <person name="Hurles M.E."/>
            <person name="Andrews T.D."/>
            <person name="Scott C.E."/>
            <person name="Searle S."/>
            <person name="Ramser J."/>
            <person name="Whittaker A."/>
            <person name="Deadman R."/>
            <person name="Carter N.P."/>
            <person name="Hunt S.E."/>
            <person name="Chen R."/>
            <person name="Cree A."/>
            <person name="Gunaratne P."/>
            <person name="Havlak P."/>
            <person name="Hodgson A."/>
            <person name="Metzker M.L."/>
            <person name="Richards S."/>
            <person name="Scott G."/>
            <person name="Steffen D."/>
            <person name="Sodergren E."/>
            <person name="Wheeler D.A."/>
            <person name="Worley K.C."/>
            <person name="Ainscough R."/>
            <person name="Ambrose K.D."/>
            <person name="Ansari-Lari M.A."/>
            <person name="Aradhya S."/>
            <person name="Ashwell R.I."/>
            <person name="Babbage A.K."/>
            <person name="Bagguley C.L."/>
            <person name="Ballabio A."/>
            <person name="Banerjee R."/>
            <person name="Barker G.E."/>
            <person name="Barlow K.F."/>
            <person name="Barrett I.P."/>
            <person name="Bates K.N."/>
            <person name="Beare D.M."/>
            <person name="Beasley H."/>
            <person name="Beasley O."/>
            <person name="Beck A."/>
            <person name="Bethel G."/>
            <person name="Blechschmidt K."/>
            <person name="Brady N."/>
            <person name="Bray-Allen S."/>
            <person name="Bridgeman A.M."/>
            <person name="Brown A.J."/>
            <person name="Brown M.J."/>
            <person name="Bonnin D."/>
            <person name="Bruford E.A."/>
            <person name="Buhay C."/>
            <person name="Burch P."/>
            <person name="Burford D."/>
            <person name="Burgess J."/>
            <person name="Burrill W."/>
            <person name="Burton J."/>
            <person name="Bye J.M."/>
            <person name="Carder C."/>
            <person name="Carrel L."/>
            <person name="Chako J."/>
            <person name="Chapman J.C."/>
            <person name="Chavez D."/>
            <person name="Chen E."/>
            <person name="Chen G."/>
            <person name="Chen Y."/>
            <person name="Chen Z."/>
            <person name="Chinault C."/>
            <person name="Ciccodicola A."/>
            <person name="Clark S.Y."/>
            <person name="Clarke G."/>
            <person name="Clee C.M."/>
            <person name="Clegg S."/>
            <person name="Clerc-Blankenburg K."/>
            <person name="Clifford K."/>
            <person name="Cobley V."/>
            <person name="Cole C.G."/>
            <person name="Conquer J.S."/>
            <person name="Corby N."/>
            <person name="Connor R.E."/>
            <person name="David R."/>
            <person name="Davies J."/>
            <person name="Davis C."/>
            <person name="Davis J."/>
            <person name="Delgado O."/>
            <person name="Deshazo D."/>
            <person name="Dhami P."/>
            <person name="Ding Y."/>
            <person name="Dinh H."/>
            <person name="Dodsworth S."/>
            <person name="Draper H."/>
            <person name="Dugan-Rocha S."/>
            <person name="Dunham A."/>
            <person name="Dunn M."/>
            <person name="Durbin K.J."/>
            <person name="Dutta I."/>
            <person name="Eades T."/>
            <person name="Ellwood M."/>
            <person name="Emery-Cohen A."/>
            <person name="Errington H."/>
            <person name="Evans K.L."/>
            <person name="Faulkner L."/>
            <person name="Francis F."/>
            <person name="Frankland J."/>
            <person name="Fraser A.E."/>
            <person name="Galgoczy P."/>
            <person name="Gilbert J."/>
            <person name="Gill R."/>
            <person name="Gloeckner G."/>
            <person name="Gregory S.G."/>
            <person name="Gribble S."/>
            <person name="Griffiths C."/>
            <person name="Grocock R."/>
            <person name="Gu Y."/>
            <person name="Gwilliam R."/>
            <person name="Hamilton C."/>
            <person name="Hart E.A."/>
            <person name="Hawes A."/>
            <person name="Heath P.D."/>
            <person name="Heitmann K."/>
            <person name="Hennig S."/>
            <person name="Hernandez J."/>
            <person name="Hinzmann B."/>
            <person name="Ho S."/>
            <person name="Hoffs M."/>
            <person name="Howden P.J."/>
            <person name="Huckle E.J."/>
            <person name="Hume J."/>
            <person name="Hunt P.J."/>
            <person name="Hunt A.R."/>
            <person name="Isherwood J."/>
            <person name="Jacob L."/>
            <person name="Johnson D."/>
            <person name="Jones S."/>
            <person name="de Jong P.J."/>
            <person name="Joseph S.S."/>
            <person name="Keenan S."/>
            <person name="Kelly S."/>
            <person name="Kershaw J.K."/>
            <person name="Khan Z."/>
            <person name="Kioschis P."/>
            <person name="Klages S."/>
            <person name="Knights A.J."/>
            <person name="Kosiura A."/>
            <person name="Kovar-Smith C."/>
            <person name="Laird G.K."/>
            <person name="Langford C."/>
            <person name="Lawlor S."/>
            <person name="Leversha M."/>
            <person name="Lewis L."/>
            <person name="Liu W."/>
            <person name="Lloyd C."/>
            <person name="Lloyd D.M."/>
            <person name="Loulseged H."/>
            <person name="Loveland J.E."/>
            <person name="Lovell J.D."/>
            <person name="Lozado R."/>
            <person name="Lu J."/>
            <person name="Lyne R."/>
            <person name="Ma J."/>
            <person name="Maheshwari M."/>
            <person name="Matthews L.H."/>
            <person name="McDowall J."/>
            <person name="McLaren S."/>
            <person name="McMurray A."/>
            <person name="Meidl P."/>
            <person name="Meitinger T."/>
            <person name="Milne S."/>
            <person name="Miner G."/>
            <person name="Mistry S.L."/>
            <person name="Morgan M."/>
            <person name="Morris S."/>
            <person name="Mueller I."/>
            <person name="Mullikin J.C."/>
            <person name="Nguyen N."/>
            <person name="Nordsiek G."/>
            <person name="Nyakatura G."/>
            <person name="O'dell C.N."/>
            <person name="Okwuonu G."/>
            <person name="Palmer S."/>
            <person name="Pandian R."/>
            <person name="Parker D."/>
            <person name="Parrish J."/>
            <person name="Pasternak S."/>
            <person name="Patel D."/>
            <person name="Pearce A.V."/>
            <person name="Pearson D.M."/>
            <person name="Pelan S.E."/>
            <person name="Perez L."/>
            <person name="Porter K.M."/>
            <person name="Ramsey Y."/>
            <person name="Reichwald K."/>
            <person name="Rhodes S."/>
            <person name="Ridler K.A."/>
            <person name="Schlessinger D."/>
            <person name="Schueler M.G."/>
            <person name="Sehra H.K."/>
            <person name="Shaw-Smith C."/>
            <person name="Shen H."/>
            <person name="Sheridan E.M."/>
            <person name="Shownkeen R."/>
            <person name="Skuce C.D."/>
            <person name="Smith M.L."/>
            <person name="Sotheran E.C."/>
            <person name="Steingruber H.E."/>
            <person name="Steward C.A."/>
            <person name="Storey R."/>
            <person name="Swann R.M."/>
            <person name="Swarbreck D."/>
            <person name="Tabor P.E."/>
            <person name="Taudien S."/>
            <person name="Taylor T."/>
            <person name="Teague B."/>
            <person name="Thomas K."/>
            <person name="Thorpe A."/>
            <person name="Timms K."/>
            <person name="Tracey A."/>
            <person name="Trevanion S."/>
            <person name="Tromans A.C."/>
            <person name="d'Urso M."/>
            <person name="Verduzco D."/>
            <person name="Villasana D."/>
            <person name="Waldron L."/>
            <person name="Wall M."/>
            <person name="Wang Q."/>
            <person name="Warren J."/>
            <person name="Warry G.L."/>
            <person name="Wei X."/>
            <person name="West A."/>
            <person name="Whitehead S.L."/>
            <person name="Whiteley M.N."/>
            <person name="Wilkinson J.E."/>
            <person name="Willey D.L."/>
            <person name="Williams G."/>
            <person name="Williams L."/>
            <person name="Williamson A."/>
            <person name="Williamson H."/>
            <person name="Wilming L."/>
            <person name="Woodmansey R.L."/>
            <person name="Wray P.W."/>
            <person name="Yen J."/>
            <person name="Zhang J."/>
            <person name="Zhou J."/>
            <person name="Zoghbi H."/>
            <person name="Zorilla S."/>
            <person name="Buck D."/>
            <person name="Reinhardt R."/>
            <person name="Poustka A."/>
            <person name="Rosenthal A."/>
            <person name="Lehrach H."/>
            <person name="Meindl A."/>
            <person name="Minx P.J."/>
            <person name="Hillier L.W."/>
            <person name="Willard H.F."/>
            <person name="Wilson R.K."/>
            <person name="Waterston R.H."/>
            <person name="Rice C.M."/>
            <person name="Vaudin M."/>
            <person name="Coulson A."/>
            <person name="Nelson D.L."/>
            <person name="Weinstock G."/>
            <person name="Sulston J.E."/>
            <person name="Durbin R.M."/>
            <person name="Hubbard T."/>
            <person name="Gibbs R.A."/>
            <person name="Beck S."/>
            <person name="Rogers J."/>
            <person name="Bentley D.R."/>
        </authorList>
    </citation>
    <scope>NUCLEOTIDE SEQUENCE [LARGE SCALE GENOMIC DNA]</scope>
</reference>
<reference evidence="12" key="2">
    <citation type="submission" date="2005-09" db="EMBL/GenBank/DDBJ databases">
        <authorList>
            <person name="Mural R.J."/>
            <person name="Istrail S."/>
            <person name="Sutton G.G."/>
            <person name="Florea L."/>
            <person name="Halpern A.L."/>
            <person name="Mobarry C.M."/>
            <person name="Lippert R."/>
            <person name="Walenz B."/>
            <person name="Shatkay H."/>
            <person name="Dew I."/>
            <person name="Miller J.R."/>
            <person name="Flanigan M.J."/>
            <person name="Edwards N.J."/>
            <person name="Bolanos R."/>
            <person name="Fasulo D."/>
            <person name="Halldorsson B.V."/>
            <person name="Hannenhalli S."/>
            <person name="Turner R."/>
            <person name="Yooseph S."/>
            <person name="Lu F."/>
            <person name="Nusskern D.R."/>
            <person name="Shue B.C."/>
            <person name="Zheng X.H."/>
            <person name="Zhong F."/>
            <person name="Delcher A.L."/>
            <person name="Huson D.H."/>
            <person name="Kravitz S.A."/>
            <person name="Mouchard L."/>
            <person name="Reinert K."/>
            <person name="Remington K.A."/>
            <person name="Clark A.G."/>
            <person name="Waterman M.S."/>
            <person name="Eichler E.E."/>
            <person name="Adams M.D."/>
            <person name="Hunkapiller M.W."/>
            <person name="Myers E.W."/>
            <person name="Venter J.C."/>
        </authorList>
    </citation>
    <scope>NUCLEOTIDE SEQUENCE [LARGE SCALE GENOMIC DNA]</scope>
</reference>
<reference evidence="9 10" key="3">
    <citation type="journal article" date="2004" name="Genome Res.">
        <title>The status, quality, and expansion of the NIH full-length cDNA project: the Mammalian Gene Collection (MGC).</title>
        <authorList>
            <consortium name="The MGC Project Team"/>
        </authorList>
    </citation>
    <scope>NUCLEOTIDE SEQUENCE [LARGE SCALE MRNA] (ISOFORMS 1 AND 2)</scope>
</reference>
<reference evidence="9" key="4">
    <citation type="journal article" date="2005" name="Dev. Cell">
        <title>Groucho-associated transcriptional repressor ripply1 is required for proper transition from the presomitic mesoderm to somites.</title>
        <authorList>
            <person name="Kawamura A."/>
            <person name="Koshida S."/>
            <person name="Hijikata H."/>
            <person name="Ohbayashi A."/>
            <person name="Kondoh H."/>
            <person name="Takada S."/>
        </authorList>
    </citation>
    <scope>IDENTIFICATION AS RIPPLY1</scope>
</reference>
<accession>Q0D2K3</accession>
<accession>A0JP63</accession>
<accession>Q0VGB3</accession>
<accession>Q5JRB8</accession>
<accession>Q5JRB9</accession>
<proteinExistence type="evidence at protein level"/>
<dbReference type="EMBL" id="AL591849">
    <property type="protein sequence ID" value="CAI40159.1"/>
    <property type="status" value="ALT_INIT"/>
    <property type="molecule type" value="Genomic_DNA"/>
</dbReference>
<dbReference type="EMBL" id="AL591849">
    <property type="protein sequence ID" value="CAI40160.1"/>
    <property type="status" value="ALT_INIT"/>
    <property type="molecule type" value="Genomic_DNA"/>
</dbReference>
<dbReference type="EMBL" id="CH471120">
    <property type="protein sequence ID" value="EAX02733.1"/>
    <property type="molecule type" value="Genomic_DNA"/>
</dbReference>
<dbReference type="EMBL" id="BC105691">
    <property type="protein sequence ID" value="AAI05692.1"/>
    <property type="molecule type" value="mRNA"/>
</dbReference>
<dbReference type="EMBL" id="BC105692">
    <property type="protein sequence ID" value="AAI05693.1"/>
    <property type="molecule type" value="mRNA"/>
</dbReference>
<dbReference type="EMBL" id="BC110436">
    <property type="protein sequence ID" value="AAI10437.1"/>
    <property type="status" value="ALT_SEQ"/>
    <property type="molecule type" value="mRNA"/>
</dbReference>
<dbReference type="EMBL" id="BC127250">
    <property type="protein sequence ID" value="AAI27251.1"/>
    <property type="molecule type" value="mRNA"/>
</dbReference>
<dbReference type="CCDS" id="CCDS48145.1">
    <molecule id="Q0D2K3-1"/>
</dbReference>
<dbReference type="CCDS" id="CCDS55471.1">
    <molecule id="Q0D2K3-2"/>
</dbReference>
<dbReference type="RefSeq" id="NP_001165177.1">
    <molecule id="Q0D2K3-2"/>
    <property type="nucleotide sequence ID" value="NM_001171706.2"/>
</dbReference>
<dbReference type="RefSeq" id="NP_612391.1">
    <molecule id="Q0D2K3-1"/>
    <property type="nucleotide sequence ID" value="NM_138382.3"/>
</dbReference>
<dbReference type="BioGRID" id="124912">
    <property type="interactions" value="56"/>
</dbReference>
<dbReference type="FunCoup" id="Q0D2K3">
    <property type="interactions" value="49"/>
</dbReference>
<dbReference type="IntAct" id="Q0D2K3">
    <property type="interactions" value="50"/>
</dbReference>
<dbReference type="STRING" id="9606.ENSP00000276173"/>
<dbReference type="PhosphoSitePlus" id="Q0D2K3"/>
<dbReference type="BioMuta" id="RIPPLY1"/>
<dbReference type="MassIVE" id="Q0D2K3"/>
<dbReference type="PaxDb" id="9606-ENSP00000276173"/>
<dbReference type="Antibodypedia" id="63924">
    <property type="antibodies" value="11 antibodies from 7 providers"/>
</dbReference>
<dbReference type="DNASU" id="92129"/>
<dbReference type="Ensembl" id="ENST00000276173.5">
    <molecule id="Q0D2K3-1"/>
    <property type="protein sequence ID" value="ENSP00000276173.4"/>
    <property type="gene ID" value="ENSG00000147223.6"/>
</dbReference>
<dbReference type="Ensembl" id="ENST00000411805.1">
    <molecule id="Q0D2K3-2"/>
    <property type="protein sequence ID" value="ENSP00000400539.1"/>
    <property type="gene ID" value="ENSG00000147223.6"/>
</dbReference>
<dbReference type="GeneID" id="92129"/>
<dbReference type="KEGG" id="hsa:92129"/>
<dbReference type="MANE-Select" id="ENST00000276173.5">
    <property type="protein sequence ID" value="ENSP00000276173.4"/>
    <property type="RefSeq nucleotide sequence ID" value="NM_138382.3"/>
    <property type="RefSeq protein sequence ID" value="NP_612391.1"/>
</dbReference>
<dbReference type="UCSC" id="uc004emr.3">
    <molecule id="Q0D2K3-1"/>
    <property type="organism name" value="human"/>
</dbReference>
<dbReference type="AGR" id="HGNC:25117"/>
<dbReference type="CTD" id="92129"/>
<dbReference type="DisGeNET" id="92129"/>
<dbReference type="GeneCards" id="RIPPLY1"/>
<dbReference type="HGNC" id="HGNC:25117">
    <property type="gene designation" value="RIPPLY1"/>
</dbReference>
<dbReference type="HPA" id="ENSG00000147223">
    <property type="expression patterns" value="Tissue enhanced (kidney, liver)"/>
</dbReference>
<dbReference type="MalaCards" id="RIPPLY1"/>
<dbReference type="MIM" id="300575">
    <property type="type" value="gene"/>
</dbReference>
<dbReference type="neXtProt" id="NX_Q0D2K3"/>
<dbReference type="OpenTargets" id="ENSG00000147223"/>
<dbReference type="PharmGKB" id="PA162401348"/>
<dbReference type="VEuPathDB" id="HostDB:ENSG00000147223"/>
<dbReference type="eggNOG" id="ENOG502S6U6">
    <property type="taxonomic scope" value="Eukaryota"/>
</dbReference>
<dbReference type="GeneTree" id="ENSGT00940000161952"/>
<dbReference type="HOGENOM" id="CLU_117697_0_0_1"/>
<dbReference type="InParanoid" id="Q0D2K3"/>
<dbReference type="OMA" id="NSEFHHP"/>
<dbReference type="OrthoDB" id="5978888at2759"/>
<dbReference type="PAN-GO" id="Q0D2K3">
    <property type="GO annotations" value="3 GO annotations based on evolutionary models"/>
</dbReference>
<dbReference type="PhylomeDB" id="Q0D2K3"/>
<dbReference type="TreeFam" id="TF336045"/>
<dbReference type="PathwayCommons" id="Q0D2K3"/>
<dbReference type="SignaLink" id="Q0D2K3"/>
<dbReference type="BioGRID-ORCS" id="92129">
    <property type="hits" value="19 hits in 772 CRISPR screens"/>
</dbReference>
<dbReference type="GenomeRNAi" id="92129"/>
<dbReference type="Pharos" id="Q0D2K3">
    <property type="development level" value="Tdark"/>
</dbReference>
<dbReference type="PRO" id="PR:Q0D2K3"/>
<dbReference type="Proteomes" id="UP000005640">
    <property type="component" value="Chromosome X"/>
</dbReference>
<dbReference type="RNAct" id="Q0D2K3">
    <property type="molecule type" value="protein"/>
</dbReference>
<dbReference type="Bgee" id="ENSG00000147223">
    <property type="expression patterns" value="Expressed in male germ line stem cell (sensu Vertebrata) in testis and 65 other cell types or tissues"/>
</dbReference>
<dbReference type="GO" id="GO:0005634">
    <property type="term" value="C:nucleus"/>
    <property type="evidence" value="ECO:0000250"/>
    <property type="project" value="UniProtKB"/>
</dbReference>
<dbReference type="GO" id="GO:0009880">
    <property type="term" value="P:embryonic pattern specification"/>
    <property type="evidence" value="ECO:0000250"/>
    <property type="project" value="UniProtKB"/>
</dbReference>
<dbReference type="GO" id="GO:0045892">
    <property type="term" value="P:negative regulation of DNA-templated transcription"/>
    <property type="evidence" value="ECO:0000250"/>
    <property type="project" value="UniProtKB"/>
</dbReference>
<dbReference type="GO" id="GO:0000122">
    <property type="term" value="P:negative regulation of transcription by RNA polymerase II"/>
    <property type="evidence" value="ECO:0000318"/>
    <property type="project" value="GO_Central"/>
</dbReference>
<dbReference type="GO" id="GO:0032525">
    <property type="term" value="P:somite rostral/caudal axis specification"/>
    <property type="evidence" value="ECO:0000250"/>
    <property type="project" value="UniProtKB"/>
</dbReference>
<dbReference type="GO" id="GO:0001757">
    <property type="term" value="P:somite specification"/>
    <property type="evidence" value="ECO:0000250"/>
    <property type="project" value="UniProtKB"/>
</dbReference>
<dbReference type="InterPro" id="IPR028127">
    <property type="entry name" value="Ripply_fam"/>
</dbReference>
<dbReference type="PANTHER" id="PTHR16770">
    <property type="entry name" value="PROTEIN RIPPLY-LIKE"/>
    <property type="match status" value="1"/>
</dbReference>
<dbReference type="PANTHER" id="PTHR16770:SF5">
    <property type="entry name" value="PROTEIN RIPPLY1"/>
    <property type="match status" value="1"/>
</dbReference>
<dbReference type="Pfam" id="PF14998">
    <property type="entry name" value="Ripply"/>
    <property type="match status" value="1"/>
</dbReference>
<keyword id="KW-0025">Alternative splicing</keyword>
<keyword id="KW-0217">Developmental protein</keyword>
<keyword id="KW-0539">Nucleus</keyword>
<keyword id="KW-1185">Reference proteome</keyword>
<keyword id="KW-0678">Repressor</keyword>
<keyword id="KW-0804">Transcription</keyword>
<keyword id="KW-0805">Transcription regulation</keyword>
<sequence length="151" mass="16379">MDSAACAAAATPVPALALALAPDLAQAPLALPGLLSPSCLLSSGQEVNGSERGTCLWRPWLSSTNDSPRQMRKLVDLAAGGATAAEVTKAESKFHHPVRLFWPKSRSFDYLYSAGEILLQNFPVQATINLYEDSDSEEEEEDEEQEDEEEK</sequence>
<comment type="function">
    <text evidence="2">Plays a role in somitogenesis. Essential for transcriptional repression of the segmental patterning genes, thus terminating the segmentation program in the presomitic mesoderm, and also required for the maintenance of rostrocaudal polarity in somites (By similarity).</text>
</comment>
<comment type="interaction">
    <interactant intactId="EBI-10226430">
        <id>Q0D2K3</id>
    </interactant>
    <interactant intactId="EBI-8640233">
        <id>Q5T686</id>
        <label>AVPI1</label>
    </interactant>
    <organismsDiffer>false</organismsDiffer>
    <experiments>3</experiments>
</comment>
<comment type="interaction">
    <interactant intactId="EBI-10226430">
        <id>Q0D2K3</id>
    </interactant>
    <interactant intactId="EBI-10181188">
        <id>Q8N7W2-2</id>
        <label>BEND7</label>
    </interactant>
    <organismsDiffer>false</organismsDiffer>
    <experiments>3</experiments>
</comment>
<comment type="interaction">
    <interactant intactId="EBI-10226430">
        <id>Q0D2K3</id>
    </interactant>
    <interactant intactId="EBI-10245749">
        <id>Q5T655</id>
        <label>CFAP58</label>
    </interactant>
    <organismsDiffer>false</organismsDiffer>
    <experiments>3</experiments>
</comment>
<comment type="interaction">
    <interactant intactId="EBI-10226430">
        <id>Q0D2K3</id>
    </interactant>
    <interactant intactId="EBI-11962928">
        <id>Q9UI47-2</id>
        <label>CTNNA3</label>
    </interactant>
    <organismsDiffer>false</organismsDiffer>
    <experiments>3</experiments>
</comment>
<comment type="interaction">
    <interactant intactId="EBI-10226430">
        <id>Q0D2K3</id>
    </interactant>
    <interactant intactId="EBI-2559052">
        <id>Q66K64</id>
        <label>DCAF15</label>
    </interactant>
    <organismsDiffer>false</organismsDiffer>
    <experiments>3</experiments>
</comment>
<comment type="interaction">
    <interactant intactId="EBI-10226430">
        <id>Q0D2K3</id>
    </interactant>
    <interactant intactId="EBI-911391">
        <id>Q96HU8</id>
        <label>DIRAS2</label>
    </interactant>
    <organismsDiffer>false</organismsDiffer>
    <experiments>3</experiments>
</comment>
<comment type="interaction">
    <interactant intactId="EBI-10226430">
        <id>Q0D2K3</id>
    </interactant>
    <interactant intactId="EBI-701903">
        <id>Q14192</id>
        <label>FHL2</label>
    </interactant>
    <organismsDiffer>false</organismsDiffer>
    <experiments>3</experiments>
</comment>
<comment type="interaction">
    <interactant intactId="EBI-10226430">
        <id>Q0D2K3</id>
    </interactant>
    <interactant intactId="EBI-18300553">
        <id>Q8TC17</id>
        <label>GRAPL</label>
    </interactant>
    <organismsDiffer>false</organismsDiffer>
    <experiments>3</experiments>
</comment>
<comment type="interaction">
    <interactant intactId="EBI-10226430">
        <id>Q0D2K3</id>
    </interactant>
    <interactant intactId="EBI-12827521">
        <id>Q8TE85-2</id>
        <label>GRHL3</label>
    </interactant>
    <organismsDiffer>false</organismsDiffer>
    <experiments>3</experiments>
</comment>
<comment type="interaction">
    <interactant intactId="EBI-10226430">
        <id>Q0D2K3</id>
    </interactant>
    <interactant intactId="EBI-358900">
        <id>Q16695</id>
        <label>H3-4</label>
    </interactant>
    <organismsDiffer>false</organismsDiffer>
    <experiments>3</experiments>
</comment>
<comment type="interaction">
    <interactant intactId="EBI-10226430">
        <id>Q0D2K3</id>
    </interactant>
    <interactant intactId="EBI-13086076">
        <id>P61296-2</id>
        <label>HAND2</label>
    </interactant>
    <organismsDiffer>false</organismsDiffer>
    <experiments>3</experiments>
</comment>
<comment type="interaction">
    <interactant intactId="EBI-10226430">
        <id>Q0D2K3</id>
    </interactant>
    <interactant intactId="EBI-10276431">
        <id>Q8WUI4-5</id>
        <label>HDAC7</label>
    </interactant>
    <organismsDiffer>false</organismsDiffer>
    <experiments>3</experiments>
</comment>
<comment type="interaction">
    <interactant intactId="EBI-10226430">
        <id>Q0D2K3</id>
    </interactant>
    <interactant intactId="EBI-12094670">
        <id>Q8WUI4-6</id>
        <label>HDAC7</label>
    </interactant>
    <organismsDiffer>false</organismsDiffer>
    <experiments>6</experiments>
</comment>
<comment type="interaction">
    <interactant intactId="EBI-10226430">
        <id>Q0D2K3</id>
    </interactant>
    <interactant intactId="EBI-9658404">
        <id>Q5VVH5</id>
        <label>IRAK1BP1</label>
    </interactant>
    <organismsDiffer>false</organismsDiffer>
    <experiments>3</experiments>
</comment>
<comment type="interaction">
    <interactant intactId="EBI-10226430">
        <id>Q0D2K3</id>
    </interactant>
    <interactant intactId="EBI-1047093">
        <id>O76011</id>
        <label>KRT34</label>
    </interactant>
    <organismsDiffer>false</organismsDiffer>
    <experiments>3</experiments>
</comment>
<comment type="interaction">
    <interactant intactId="EBI-10226430">
        <id>Q0D2K3</id>
    </interactant>
    <interactant intactId="EBI-11987923">
        <id>P59942</id>
        <label>MCCD1</label>
    </interactant>
    <organismsDiffer>false</organismsDiffer>
    <experiments>3</experiments>
</comment>
<comment type="interaction">
    <interactant intactId="EBI-10226430">
        <id>Q0D2K3</id>
    </interactant>
    <interactant intactId="EBI-724076">
        <id>Q99750</id>
        <label>MDFI</label>
    </interactant>
    <organismsDiffer>false</organismsDiffer>
    <experiments>6</experiments>
</comment>
<comment type="interaction">
    <interactant intactId="EBI-10226430">
        <id>Q0D2K3</id>
    </interactant>
    <interactant intactId="EBI-13288755">
        <id>A0JLT2-2</id>
        <label>MED19</label>
    </interactant>
    <organismsDiffer>false</organismsDiffer>
    <experiments>3</experiments>
</comment>
<comment type="interaction">
    <interactant intactId="EBI-10226430">
        <id>Q0D2K3</id>
    </interactant>
    <interactant intactId="EBI-16439278">
        <id>Q6FHY5</id>
        <label>MEOX2</label>
    </interactant>
    <organismsDiffer>false</organismsDiffer>
    <experiments>3</experiments>
</comment>
<comment type="interaction">
    <interactant intactId="EBI-10226430">
        <id>Q0D2K3</id>
    </interactant>
    <interactant intactId="EBI-1246238">
        <id>P17568</id>
        <label>NDUFB7</label>
    </interactant>
    <organismsDiffer>false</organismsDiffer>
    <experiments>3</experiments>
</comment>
<comment type="interaction">
    <interactant intactId="EBI-10226430">
        <id>Q0D2K3</id>
    </interactant>
    <interactant intactId="EBI-11022007">
        <id>Q9HBE1-4</id>
        <label>PATZ1</label>
    </interactant>
    <organismsDiffer>false</organismsDiffer>
    <experiments>3</experiments>
</comment>
<comment type="interaction">
    <interactant intactId="EBI-10226430">
        <id>Q0D2K3</id>
    </interactant>
    <interactant intactId="EBI-10302990">
        <id>Q9BYU1</id>
        <label>PBX4</label>
    </interactant>
    <organismsDiffer>false</organismsDiffer>
    <experiments>3</experiments>
</comment>
<comment type="interaction">
    <interactant intactId="EBI-10226430">
        <id>Q0D2K3</id>
    </interactant>
    <interactant intactId="EBI-357275">
        <id>Q99471</id>
        <label>PFDN5</label>
    </interactant>
    <organismsDiffer>false</organismsDiffer>
    <experiments>3</experiments>
</comment>
<comment type="interaction">
    <interactant intactId="EBI-10226430">
        <id>Q0D2K3</id>
    </interactant>
    <interactant intactId="EBI-2876622">
        <id>Q9UPG8</id>
        <label>PLAGL2</label>
    </interactant>
    <organismsDiffer>false</organismsDiffer>
    <experiments>5</experiments>
</comment>
<comment type="interaction">
    <interactant intactId="EBI-10226430">
        <id>Q0D2K3</id>
    </interactant>
    <interactant intactId="EBI-12754095">
        <id>P86480</id>
        <label>PRR20D</label>
    </interactant>
    <organismsDiffer>false</organismsDiffer>
    <experiments>3</experiments>
</comment>
<comment type="interaction">
    <interactant intactId="EBI-10226430">
        <id>Q0D2K3</id>
    </interactant>
    <interactant intactId="EBI-17630019">
        <id>Q9NZH5-2</id>
        <label>PTTG2</label>
    </interactant>
    <organismsDiffer>false</organismsDiffer>
    <experiments>3</experiments>
</comment>
<comment type="interaction">
    <interactant intactId="EBI-10226430">
        <id>Q0D2K3</id>
    </interactant>
    <interactant intactId="EBI-740322">
        <id>Q93062</id>
        <label>RBPMS</label>
    </interactant>
    <organismsDiffer>false</organismsDiffer>
    <experiments>3</experiments>
</comment>
<comment type="interaction">
    <interactant intactId="EBI-10226430">
        <id>Q0D2K3</id>
    </interactant>
    <interactant intactId="EBI-307352">
        <id>Q04864</id>
        <label>REL</label>
    </interactant>
    <organismsDiffer>false</organismsDiffer>
    <experiments>3</experiments>
</comment>
<comment type="interaction">
    <interactant intactId="EBI-10226430">
        <id>Q0D2K3</id>
    </interactant>
    <interactant intactId="EBI-1244971">
        <id>Q15669</id>
        <label>RHOH</label>
    </interactant>
    <organismsDiffer>false</organismsDiffer>
    <experiments>3</experiments>
</comment>
<comment type="interaction">
    <interactant intactId="EBI-10226430">
        <id>Q0D2K3</id>
    </interactant>
    <interactant intactId="EBI-13072754">
        <id>Q5SSQ6-2</id>
        <label>SAPCD1</label>
    </interactant>
    <organismsDiffer>false</organismsDiffer>
    <experiments>3</experiments>
</comment>
<comment type="interaction">
    <interactant intactId="EBI-10226430">
        <id>Q0D2K3</id>
    </interactant>
    <interactant intactId="EBI-741515">
        <id>Q9NVV9</id>
        <label>THAP1</label>
    </interactant>
    <organismsDiffer>false</organismsDiffer>
    <experiments>6</experiments>
</comment>
<comment type="interaction">
    <interactant intactId="EBI-10226430">
        <id>Q0D2K3</id>
    </interactant>
    <interactant intactId="EBI-11741437">
        <id>Q08117-2</id>
        <label>TLE5</label>
    </interactant>
    <organismsDiffer>false</organismsDiffer>
    <experiments>3</experiments>
</comment>
<comment type="interaction">
    <interactant intactId="EBI-10226430">
        <id>Q0D2K3</id>
    </interactant>
    <interactant intactId="EBI-359224">
        <id>Q13077</id>
        <label>TRAF1</label>
    </interactant>
    <organismsDiffer>false</organismsDiffer>
    <experiments>3</experiments>
</comment>
<comment type="interaction">
    <interactant intactId="EBI-10226430">
        <id>Q0D2K3</id>
    </interactant>
    <interactant intactId="EBI-355744">
        <id>Q12933</id>
        <label>TRAF2</label>
    </interactant>
    <organismsDiffer>false</organismsDiffer>
    <experiments>6</experiments>
</comment>
<comment type="interaction">
    <interactant intactId="EBI-10226430">
        <id>Q0D2K3</id>
    </interactant>
    <interactant intactId="EBI-357631">
        <id>Q13114</id>
        <label>TRAF3</label>
    </interactant>
    <organismsDiffer>false</organismsDiffer>
    <experiments>3</experiments>
</comment>
<comment type="interaction">
    <interactant intactId="EBI-10226430">
        <id>Q0D2K3</id>
    </interactant>
    <interactant intactId="EBI-2107455">
        <id>Q08AM6</id>
        <label>VAC14</label>
    </interactant>
    <organismsDiffer>false</organismsDiffer>
    <experiments>3</experiments>
</comment>
<comment type="interaction">
    <interactant intactId="EBI-10226430">
        <id>Q0D2K3</id>
    </interactant>
    <interactant intactId="EBI-11983165">
        <id>Q99990</id>
        <label>VGLL1</label>
    </interactant>
    <organismsDiffer>false</organismsDiffer>
    <experiments>3</experiments>
</comment>
<comment type="interaction">
    <interactant intactId="EBI-10226430">
        <id>Q0D2K3</id>
    </interactant>
    <interactant intactId="EBI-12030590">
        <id>Q9H0C1</id>
        <label>ZMYND12</label>
    </interactant>
    <organismsDiffer>false</organismsDiffer>
    <experiments>3</experiments>
</comment>
<comment type="interaction">
    <interactant intactId="EBI-10226430">
        <id>Q0D2K3</id>
    </interactant>
    <interactant intactId="EBI-4395669">
        <id>Q6ZNG0</id>
        <label>ZNF620</label>
    </interactant>
    <organismsDiffer>false</organismsDiffer>
    <experiments>3</experiments>
</comment>
<comment type="interaction">
    <interactant intactId="EBI-10226430">
        <id>Q0D2K3</id>
    </interactant>
    <interactant intactId="EBI-7138303">
        <id>Q8NCA9</id>
        <label>ZNF784</label>
    </interactant>
    <organismsDiffer>false</organismsDiffer>
    <experiments>3</experiments>
</comment>
<comment type="subcellular location">
    <subcellularLocation>
        <location evidence="2">Nucleus</location>
    </subcellularLocation>
</comment>
<comment type="alternative products">
    <event type="alternative splicing"/>
    <isoform>
        <id>Q0D2K3-1</id>
        <name evidence="5 6">1</name>
        <sequence type="displayed"/>
    </isoform>
    <isoform>
        <id>Q0D2K3-2</id>
        <name evidence="5 6">2</name>
        <sequence type="described" ref="VSP_052555"/>
    </isoform>
</comment>
<comment type="domain">
    <text evidence="1">The ripply homology domain is required for transcriptional repression.</text>
</comment>
<comment type="domain">
    <text evidence="2">The WRPW motif is required for binding to TLE/GROUCHO proteins.</text>
</comment>
<comment type="similarity">
    <text evidence="9">Belongs to the ripply family.</text>
</comment>
<comment type="sequence caution" evidence="9">
    <conflict type="miscellaneous discrepancy">
        <sequence resource="EMBL-CDS" id="AAI10437"/>
    </conflict>
    <text>Intron retention.</text>
</comment>
<comment type="sequence caution" evidence="9">
    <conflict type="erroneous initiation">
        <sequence resource="EMBL-CDS" id="CAI40159"/>
    </conflict>
</comment>
<comment type="sequence caution" evidence="9">
    <conflict type="erroneous initiation">
        <sequence resource="EMBL-CDS" id="CAI40160"/>
    </conflict>
</comment>
<protein>
    <recommendedName>
        <fullName>Protein ripply1</fullName>
    </recommendedName>
</protein>
<organism>
    <name type="scientific">Homo sapiens</name>
    <name type="common">Human</name>
    <dbReference type="NCBI Taxonomy" id="9606"/>
    <lineage>
        <taxon>Eukaryota</taxon>
        <taxon>Metazoa</taxon>
        <taxon>Chordata</taxon>
        <taxon>Craniata</taxon>
        <taxon>Vertebrata</taxon>
        <taxon>Euteleostomi</taxon>
        <taxon>Mammalia</taxon>
        <taxon>Eutheria</taxon>
        <taxon>Euarchontoglires</taxon>
        <taxon>Primates</taxon>
        <taxon>Haplorrhini</taxon>
        <taxon>Catarrhini</taxon>
        <taxon>Hominidae</taxon>
        <taxon>Homo</taxon>
    </lineage>
</organism>
<gene>
    <name evidence="13" type="primary">RIPPLY1</name>
</gene>
<evidence type="ECO:0000250" key="1"/>
<evidence type="ECO:0000250" key="2">
    <source>
        <dbReference type="UniProtKB" id="Q2WG80"/>
    </source>
</evidence>
<evidence type="ECO:0000255" key="3"/>
<evidence type="ECO:0000256" key="4">
    <source>
        <dbReference type="SAM" id="MobiDB-lite"/>
    </source>
</evidence>
<evidence type="ECO:0000269" key="5">
    <source>
    </source>
</evidence>
<evidence type="ECO:0000269" key="6">
    <source>
    </source>
</evidence>
<evidence type="ECO:0000303" key="7">
    <source>
    </source>
</evidence>
<evidence type="ECO:0000303" key="8">
    <source>
    </source>
</evidence>
<evidence type="ECO:0000305" key="9"/>
<evidence type="ECO:0000312" key="10">
    <source>
        <dbReference type="EMBL" id="AAI05692.1"/>
    </source>
</evidence>
<evidence type="ECO:0000312" key="11">
    <source>
        <dbReference type="EMBL" id="CAI40160.1"/>
    </source>
</evidence>
<evidence type="ECO:0000312" key="12">
    <source>
        <dbReference type="EMBL" id="EAX02733.1"/>
    </source>
</evidence>
<evidence type="ECO:0000312" key="13">
    <source>
        <dbReference type="HGNC" id="HGNC:25117"/>
    </source>
</evidence>